<sequence>MLNRENKTAITRKGMVSNRLNKFSIRKYTVGTASILVGTTLIFGLGNQEAKAAESTNKELNEATTSASDNQSSDKVDMQQLNQEDNTKNDNQKEMVSSQGNETTSNGNKLIEKESVQSTTGNKVEVSTAKSDEQASPKSTNEDLNTKQTISNQEALQPDLQENKSVVNVQPTNEENKKVDAKTESTTLNVKSDAIKSNDETLVDNNSNSNNENNADIILPKSTAPKRLNTRMRIAAVQPSSTEAKNVNDLITSNTTLTVVDADKNNKIVPAQDYLSLKSQITVDDKVKSGDYFTIKYSDTVQVYGLNPEDIKNIGDIKDPNNGETIATAKHDTANNLITYTFTDYVDRFNSVQMGINYSIYMDADTIPVSKNDVEFNVTIGNTTTKTTANIQYPDYVVNEKNSIGSAFTETVSHVGNKENPGYYKQTIYVNPSENSLTNAKLKVQAYHSSYPNNIGQINKDVTDIKIYQVPKGYTLNKGYDVNTKELTDVTNQYLQKITYGDNNSAVIDFGNADSAYVVMVNTKFQYTNSESPTLVQMATLSSTGNKSVSTGNALGFTNNQSGGAGQEVYKIGNYVWEDTNKNGVQELGEKGVGNVTVTVFDNNTNTKVGEAVTKEDGSYLIPNLPNGDYRVEFSNLPKGYEVTPSKQGNNEELDSNGLSSVITVNGKDNLSADLGIYKPKYNLGDYVWEDTNKNGIQDQDEKGISGVTVTLKDENGNVLKTVTTDADGKYKFTDLDNGNYKVEFTTPEGYTPTTVTSGSDIEKDSNGLTTTGVINGADNMTLDSGFYKTPKYNLGNYVWEDTNKDGKQDSTEKGISGVTVTLKNENGEVLQTTKTDKDGKYQFTGLENGTYKVEFETPSGYTPTQVGSGTDEGIDSNGTSTTGVIKDKDNDTIDSGFYKPTYNLGDYVWEDTNKNGVQDKDEKGISGVTVTLKDENDKVLKTVTTDENGKYQFTDLNNGTYKVEFETPSGYTPTSVTSGNDTEKDSNGLTTTGVIKDADNMTLDSGFYKTPKYSLGDYVWYDSNKDGKQDSTEKGIKDVKVTLLNEKGEVIGTTKTDENGKYCFDNLDSGKYKVIFEKPAGLTQTGTNTTEDDKDADGGEVDVTITDHDDFTLDNGYYEEETSDSDSDSDSDSDSDRDSDSDSDSDSDSDSDSDSDSDSDSDSDSDRDSDSDSDSDSDSDSDSDSDSDSDSDSDSDSDSDSDSDSDSDSDSDSDSDSDSDSDSDSDSDSDSDSDSDSDSDSDSDSDSDSDSDSDSDSDSDSDSDSDSDSDSDSDSDSDSDSDSDSDSDSDSDSDSDSDSDSDSDSDSDSDSDSDSDSDSDAGKHTPVKPMSTTKDHHNKAKALPETGNENSGSNNATLFGGLFAALGSLLLFGRRKKQNK</sequence>
<accession>Q5HIB3</accession>
<keyword id="KW-0106">Calcium</keyword>
<keyword id="KW-0134">Cell wall</keyword>
<keyword id="KW-0572">Peptidoglycan-anchor</keyword>
<keyword id="KW-0677">Repeat</keyword>
<keyword id="KW-0964">Secreted</keyword>
<keyword id="KW-0732">Signal</keyword>
<name>SDRD_STAAC</name>
<feature type="signal peptide" evidence="2">
    <location>
        <begin position="1"/>
        <end position="35"/>
    </location>
</feature>
<feature type="chain" id="PRO_0000281206" description="Serine-aspartate repeat-containing protein D">
    <location>
        <begin position="36"/>
        <end position="1347"/>
    </location>
</feature>
<feature type="propeptide" id="PRO_0000281207" description="Removed by sortase" evidence="3">
    <location>
        <begin position="1348"/>
        <end position="1381"/>
    </location>
</feature>
<feature type="domain" description="CNA-B 1">
    <location>
        <begin position="569"/>
        <end position="680"/>
    </location>
</feature>
<feature type="domain" description="CNA-B 2">
    <location>
        <begin position="681"/>
        <end position="791"/>
    </location>
</feature>
<feature type="domain" description="CNA-B 3">
    <location>
        <begin position="792"/>
        <end position="901"/>
    </location>
</feature>
<feature type="domain" description="CNA-B 4">
    <location>
        <begin position="902"/>
        <end position="1012"/>
    </location>
</feature>
<feature type="domain" description="CNA-B 5">
    <location>
        <begin position="1013"/>
        <end position="1123"/>
    </location>
</feature>
<feature type="region of interest" description="Ligand binding A region">
    <location>
        <begin position="36"/>
        <end position="568"/>
    </location>
</feature>
<feature type="region of interest" description="Disordered" evidence="4">
    <location>
        <begin position="54"/>
        <end position="185"/>
    </location>
</feature>
<feature type="region of interest" description="Disordered" evidence="4">
    <location>
        <begin position="857"/>
        <end position="883"/>
    </location>
</feature>
<feature type="region of interest" description="Disordered" evidence="4">
    <location>
        <begin position="972"/>
        <end position="992"/>
    </location>
</feature>
<feature type="region of interest" description="Disordered" evidence="4">
    <location>
        <begin position="1078"/>
        <end position="1357"/>
    </location>
</feature>
<feature type="short sequence motif" description="YSIRK-G/S signaling motif" evidence="1">
    <location>
        <begin position="23"/>
        <end position="34"/>
    </location>
</feature>
<feature type="short sequence motif" description="LPXTG sorting signal" evidence="3">
    <location>
        <begin position="1344"/>
        <end position="1348"/>
    </location>
</feature>
<feature type="compositionally biased region" description="Polar residues" evidence="4">
    <location>
        <begin position="62"/>
        <end position="71"/>
    </location>
</feature>
<feature type="compositionally biased region" description="Polar residues" evidence="4">
    <location>
        <begin position="94"/>
        <end position="108"/>
    </location>
</feature>
<feature type="compositionally biased region" description="Basic and acidic residues" evidence="4">
    <location>
        <begin position="130"/>
        <end position="145"/>
    </location>
</feature>
<feature type="compositionally biased region" description="Polar residues" evidence="4">
    <location>
        <begin position="146"/>
        <end position="155"/>
    </location>
</feature>
<feature type="compositionally biased region" description="Polar residues" evidence="4">
    <location>
        <begin position="163"/>
        <end position="173"/>
    </location>
</feature>
<feature type="compositionally biased region" description="Basic and acidic residues" evidence="4">
    <location>
        <begin position="174"/>
        <end position="183"/>
    </location>
</feature>
<feature type="compositionally biased region" description="Polar residues" evidence="4">
    <location>
        <begin position="860"/>
        <end position="869"/>
    </location>
</feature>
<feature type="compositionally biased region" description="Polar residues" evidence="4">
    <location>
        <begin position="972"/>
        <end position="981"/>
    </location>
</feature>
<feature type="compositionally biased region" description="Acidic residues" evidence="4">
    <location>
        <begin position="1091"/>
        <end position="1101"/>
    </location>
</feature>
<feature type="compositionally biased region" description="Acidic residues" evidence="4">
    <location>
        <begin position="1118"/>
        <end position="1134"/>
    </location>
</feature>
<feature type="compositionally biased region" description="Acidic residues" evidence="4">
    <location>
        <begin position="1142"/>
        <end position="1164"/>
    </location>
</feature>
<feature type="compositionally biased region" description="Acidic residues" evidence="4">
    <location>
        <begin position="1172"/>
        <end position="1320"/>
    </location>
</feature>
<feature type="modified residue" description="Pentaglycyl murein peptidoglycan amidated threonine" evidence="3">
    <location>
        <position position="1347"/>
    </location>
</feature>
<evidence type="ECO:0000250" key="1">
    <source>
        <dbReference type="UniProtKB" id="Q2G0L4"/>
    </source>
</evidence>
<evidence type="ECO:0000255" key="2"/>
<evidence type="ECO:0000255" key="3">
    <source>
        <dbReference type="PROSITE-ProRule" id="PRU00477"/>
    </source>
</evidence>
<evidence type="ECO:0000256" key="4">
    <source>
        <dbReference type="SAM" id="MobiDB-lite"/>
    </source>
</evidence>
<evidence type="ECO:0000305" key="5"/>
<dbReference type="EMBL" id="CP000046">
    <property type="protein sequence ID" value="AAW37718.1"/>
    <property type="molecule type" value="Genomic_DNA"/>
</dbReference>
<dbReference type="RefSeq" id="WP_000934424.1">
    <property type="nucleotide sequence ID" value="NZ_JBGOFO010000009.1"/>
</dbReference>
<dbReference type="SMR" id="Q5HIB3"/>
<dbReference type="KEGG" id="sac:SACOL0609"/>
<dbReference type="HOGENOM" id="CLU_004137_0_1_9"/>
<dbReference type="PRO" id="PR:Q5HIB3"/>
<dbReference type="Proteomes" id="UP000000530">
    <property type="component" value="Chromosome"/>
</dbReference>
<dbReference type="GO" id="GO:0005576">
    <property type="term" value="C:extracellular region"/>
    <property type="evidence" value="ECO:0007669"/>
    <property type="project" value="UniProtKB-KW"/>
</dbReference>
<dbReference type="GO" id="GO:0007155">
    <property type="term" value="P:cell adhesion"/>
    <property type="evidence" value="ECO:0007669"/>
    <property type="project" value="InterPro"/>
</dbReference>
<dbReference type="Gene3D" id="2.60.40.1280">
    <property type="match status" value="1"/>
</dbReference>
<dbReference type="Gene3D" id="2.60.40.1290">
    <property type="match status" value="1"/>
</dbReference>
<dbReference type="Gene3D" id="2.60.40.10">
    <property type="entry name" value="Immunoglobulins"/>
    <property type="match status" value="5"/>
</dbReference>
<dbReference type="InterPro" id="IPR011266">
    <property type="entry name" value="Adhesin_Fg-bd_dom_2"/>
</dbReference>
<dbReference type="InterPro" id="IPR008966">
    <property type="entry name" value="Adhesion_dom_sf"/>
</dbReference>
<dbReference type="InterPro" id="IPR011252">
    <property type="entry name" value="Fibrogen-bd_dom1"/>
</dbReference>
<dbReference type="InterPro" id="IPR013783">
    <property type="entry name" value="Ig-like_fold"/>
</dbReference>
<dbReference type="InterPro" id="IPR019931">
    <property type="entry name" value="LPXTG_anchor"/>
</dbReference>
<dbReference type="InterPro" id="IPR033764">
    <property type="entry name" value="Sdr_B"/>
</dbReference>
<dbReference type="InterPro" id="IPR041171">
    <property type="entry name" value="SDR_Ig"/>
</dbReference>
<dbReference type="InterPro" id="IPR005877">
    <property type="entry name" value="YSIRK_signal_dom"/>
</dbReference>
<dbReference type="NCBIfam" id="TIGR01167">
    <property type="entry name" value="LPXTG_anchor"/>
    <property type="match status" value="1"/>
</dbReference>
<dbReference type="NCBIfam" id="NF012181">
    <property type="entry name" value="MSCRAMM_SdrD"/>
    <property type="match status" value="1"/>
</dbReference>
<dbReference type="NCBIfam" id="TIGR01168">
    <property type="entry name" value="YSIRK_signal"/>
    <property type="match status" value="1"/>
</dbReference>
<dbReference type="PANTHER" id="PTHR36108">
    <property type="entry name" value="COLOSSIN-B-RELATED"/>
    <property type="match status" value="1"/>
</dbReference>
<dbReference type="PANTHER" id="PTHR36108:SF13">
    <property type="entry name" value="COLOSSIN-B-RELATED"/>
    <property type="match status" value="1"/>
</dbReference>
<dbReference type="Pfam" id="PF17961">
    <property type="entry name" value="Big_8"/>
    <property type="match status" value="1"/>
</dbReference>
<dbReference type="Pfam" id="PF00746">
    <property type="entry name" value="Gram_pos_anchor"/>
    <property type="match status" value="1"/>
</dbReference>
<dbReference type="Pfam" id="PF17210">
    <property type="entry name" value="SdrD_B"/>
    <property type="match status" value="5"/>
</dbReference>
<dbReference type="Pfam" id="PF10425">
    <property type="entry name" value="SdrG_C_C"/>
    <property type="match status" value="1"/>
</dbReference>
<dbReference type="Pfam" id="PF04650">
    <property type="entry name" value="YSIRK_signal"/>
    <property type="match status" value="1"/>
</dbReference>
<dbReference type="SUPFAM" id="SSF49401">
    <property type="entry name" value="Bacterial adhesins"/>
    <property type="match status" value="2"/>
</dbReference>
<dbReference type="SUPFAM" id="SSF117074">
    <property type="entry name" value="Hypothetical protein PA1324"/>
    <property type="match status" value="5"/>
</dbReference>
<dbReference type="PROSITE" id="PS50847">
    <property type="entry name" value="GRAM_POS_ANCHORING"/>
    <property type="match status" value="1"/>
</dbReference>
<protein>
    <recommendedName>
        <fullName>Serine-aspartate repeat-containing protein D</fullName>
    </recommendedName>
</protein>
<reference key="1">
    <citation type="journal article" date="2005" name="J. Bacteriol.">
        <title>Insights on evolution of virulence and resistance from the complete genome analysis of an early methicillin-resistant Staphylococcus aureus strain and a biofilm-producing methicillin-resistant Staphylococcus epidermidis strain.</title>
        <authorList>
            <person name="Gill S.R."/>
            <person name="Fouts D.E."/>
            <person name="Archer G.L."/>
            <person name="Mongodin E.F."/>
            <person name="DeBoy R.T."/>
            <person name="Ravel J."/>
            <person name="Paulsen I.T."/>
            <person name="Kolonay J.F."/>
            <person name="Brinkac L.M."/>
            <person name="Beanan M.J."/>
            <person name="Dodson R.J."/>
            <person name="Daugherty S.C."/>
            <person name="Madupu R."/>
            <person name="Angiuoli S.V."/>
            <person name="Durkin A.S."/>
            <person name="Haft D.H."/>
            <person name="Vamathevan J.J."/>
            <person name="Khouri H."/>
            <person name="Utterback T.R."/>
            <person name="Lee C."/>
            <person name="Dimitrov G."/>
            <person name="Jiang L."/>
            <person name="Qin H."/>
            <person name="Weidman J."/>
            <person name="Tran K."/>
            <person name="Kang K.H."/>
            <person name="Hance I.R."/>
            <person name="Nelson K.E."/>
            <person name="Fraser C.M."/>
        </authorList>
    </citation>
    <scope>NUCLEOTIDE SEQUENCE [LARGE SCALE GENOMIC DNA]</scope>
    <source>
        <strain>COL</strain>
    </source>
</reference>
<organism>
    <name type="scientific">Staphylococcus aureus (strain COL)</name>
    <dbReference type="NCBI Taxonomy" id="93062"/>
    <lineage>
        <taxon>Bacteria</taxon>
        <taxon>Bacillati</taxon>
        <taxon>Bacillota</taxon>
        <taxon>Bacilli</taxon>
        <taxon>Bacillales</taxon>
        <taxon>Staphylococcaceae</taxon>
        <taxon>Staphylococcus</taxon>
    </lineage>
</organism>
<comment type="function">
    <text evidence="1">Cell surface-associated calcium-binding protein which plays an important role in adhesion and pathogenesis. Mediates interactions with components of the extracellular matrix such as host DSG1 to promote bacterial adhesion to host cells. Contributes to the resistance to killing by innate immune components such as neutrophils present in blood and thus attenuates bacterial clearance.</text>
</comment>
<comment type="subunit">
    <text evidence="1">Interacts with host DSG1; this interaction increases S.aureus adherence to keratinocytes.</text>
</comment>
<comment type="subcellular location">
    <subcellularLocation>
        <location evidence="3">Secreted</location>
        <location evidence="3">Cell wall</location>
        <topology evidence="3">Peptidoglycan-anchor</topology>
    </subcellularLocation>
    <text evidence="1">Anchored to the cell wall by sortase A (By similarity).</text>
</comment>
<comment type="similarity">
    <text evidence="5">Belongs to the serine-aspartate repeat-containing protein (SDr) family.</text>
</comment>
<gene>
    <name type="primary">sdrD</name>
    <name type="ordered locus">SACOL0609</name>
</gene>
<proteinExistence type="inferred from homology"/>